<protein>
    <recommendedName>
        <fullName evidence="1">Homoserine kinase</fullName>
        <shortName evidence="1">HK</shortName>
        <shortName evidence="1">HSK</shortName>
        <ecNumber evidence="1">2.7.1.39</ecNumber>
    </recommendedName>
</protein>
<feature type="chain" id="PRO_1000049182" description="Homoserine kinase">
    <location>
        <begin position="1"/>
        <end position="306"/>
    </location>
</feature>
<feature type="binding site" evidence="1">
    <location>
        <begin position="88"/>
        <end position="98"/>
    </location>
    <ligand>
        <name>ATP</name>
        <dbReference type="ChEBI" id="CHEBI:30616"/>
    </ligand>
</feature>
<proteinExistence type="inferred from homology"/>
<gene>
    <name evidence="1" type="primary">thrB</name>
    <name type="ordered locus">syc0116_d</name>
</gene>
<keyword id="KW-0028">Amino-acid biosynthesis</keyword>
<keyword id="KW-0067">ATP-binding</keyword>
<keyword id="KW-0963">Cytoplasm</keyword>
<keyword id="KW-0418">Kinase</keyword>
<keyword id="KW-0547">Nucleotide-binding</keyword>
<keyword id="KW-0791">Threonine biosynthesis</keyword>
<keyword id="KW-0808">Transferase</keyword>
<comment type="function">
    <text evidence="1">Catalyzes the ATP-dependent phosphorylation of L-homoserine to L-homoserine phosphate.</text>
</comment>
<comment type="catalytic activity">
    <reaction evidence="1">
        <text>L-homoserine + ATP = O-phospho-L-homoserine + ADP + H(+)</text>
        <dbReference type="Rhea" id="RHEA:13985"/>
        <dbReference type="ChEBI" id="CHEBI:15378"/>
        <dbReference type="ChEBI" id="CHEBI:30616"/>
        <dbReference type="ChEBI" id="CHEBI:57476"/>
        <dbReference type="ChEBI" id="CHEBI:57590"/>
        <dbReference type="ChEBI" id="CHEBI:456216"/>
        <dbReference type="EC" id="2.7.1.39"/>
    </reaction>
</comment>
<comment type="pathway">
    <text evidence="1">Amino-acid biosynthesis; L-threonine biosynthesis; L-threonine from L-aspartate: step 4/5.</text>
</comment>
<comment type="subcellular location">
    <subcellularLocation>
        <location evidence="1">Cytoplasm</location>
    </subcellularLocation>
</comment>
<comment type="similarity">
    <text evidence="1">Belongs to the GHMP kinase family. Homoserine kinase subfamily.</text>
</comment>
<accession>Q5N5W2</accession>
<name>KHSE_SYNP6</name>
<evidence type="ECO:0000255" key="1">
    <source>
        <dbReference type="HAMAP-Rule" id="MF_00384"/>
    </source>
</evidence>
<sequence>MRVRVAVPATTANLGPGFDCLGAALTLYNHFWFAPASTGELEITARGMDAEKISGDRDNLVYRAFAAFFEKQEQPVPALKLEIELAVPLARGLGSSATAIVAGLVGANALAGSPWSNAQLCDLATELEGHPDNVVPALLGGCRLAARDRQNQWAIADLDWHPDFIPVVAIPDFELSTEAARQVLPTQYSRSDAIFNAAHVGLVVRSLASGNGEWLAAALQDRLHQPYRQALIPGYAAVETAALEAGAFGLVISGAGPTLLAISSPDRAEAVRQAMLTTWQATGLSVRAEILAIAESGTQIEQETEN</sequence>
<dbReference type="EC" id="2.7.1.39" evidence="1"/>
<dbReference type="EMBL" id="AP008231">
    <property type="protein sequence ID" value="BAD78306.1"/>
    <property type="molecule type" value="Genomic_DNA"/>
</dbReference>
<dbReference type="RefSeq" id="WP_011242429.1">
    <property type="nucleotide sequence ID" value="NZ_CP085785.1"/>
</dbReference>
<dbReference type="SMR" id="Q5N5W2"/>
<dbReference type="GeneID" id="72430303"/>
<dbReference type="KEGG" id="syc:syc0116_d"/>
<dbReference type="eggNOG" id="COG0083">
    <property type="taxonomic scope" value="Bacteria"/>
</dbReference>
<dbReference type="UniPathway" id="UPA00050">
    <property type="reaction ID" value="UER00064"/>
</dbReference>
<dbReference type="Proteomes" id="UP000001175">
    <property type="component" value="Chromosome"/>
</dbReference>
<dbReference type="GO" id="GO:0005737">
    <property type="term" value="C:cytoplasm"/>
    <property type="evidence" value="ECO:0007669"/>
    <property type="project" value="UniProtKB-SubCell"/>
</dbReference>
<dbReference type="GO" id="GO:0005524">
    <property type="term" value="F:ATP binding"/>
    <property type="evidence" value="ECO:0007669"/>
    <property type="project" value="UniProtKB-UniRule"/>
</dbReference>
<dbReference type="GO" id="GO:0004413">
    <property type="term" value="F:homoserine kinase activity"/>
    <property type="evidence" value="ECO:0007669"/>
    <property type="project" value="UniProtKB-UniRule"/>
</dbReference>
<dbReference type="GO" id="GO:0009088">
    <property type="term" value="P:threonine biosynthetic process"/>
    <property type="evidence" value="ECO:0007669"/>
    <property type="project" value="UniProtKB-UniRule"/>
</dbReference>
<dbReference type="Gene3D" id="3.30.230.10">
    <property type="match status" value="1"/>
</dbReference>
<dbReference type="Gene3D" id="3.30.70.890">
    <property type="entry name" value="GHMP kinase, C-terminal domain"/>
    <property type="match status" value="1"/>
</dbReference>
<dbReference type="HAMAP" id="MF_00384">
    <property type="entry name" value="Homoser_kinase"/>
    <property type="match status" value="1"/>
</dbReference>
<dbReference type="InterPro" id="IPR013750">
    <property type="entry name" value="GHMP_kinase_C_dom"/>
</dbReference>
<dbReference type="InterPro" id="IPR036554">
    <property type="entry name" value="GHMP_kinase_C_sf"/>
</dbReference>
<dbReference type="InterPro" id="IPR006204">
    <property type="entry name" value="GHMP_kinase_N_dom"/>
</dbReference>
<dbReference type="InterPro" id="IPR006203">
    <property type="entry name" value="GHMP_knse_ATP-bd_CS"/>
</dbReference>
<dbReference type="InterPro" id="IPR000870">
    <property type="entry name" value="Homoserine_kinase"/>
</dbReference>
<dbReference type="InterPro" id="IPR020568">
    <property type="entry name" value="Ribosomal_Su5_D2-typ_SF"/>
</dbReference>
<dbReference type="InterPro" id="IPR014721">
    <property type="entry name" value="Ribsml_uS5_D2-typ_fold_subgr"/>
</dbReference>
<dbReference type="NCBIfam" id="NF002288">
    <property type="entry name" value="PRK01212.1-4"/>
    <property type="match status" value="1"/>
</dbReference>
<dbReference type="NCBIfam" id="TIGR00191">
    <property type="entry name" value="thrB"/>
    <property type="match status" value="1"/>
</dbReference>
<dbReference type="PANTHER" id="PTHR20861:SF1">
    <property type="entry name" value="HOMOSERINE KINASE"/>
    <property type="match status" value="1"/>
</dbReference>
<dbReference type="PANTHER" id="PTHR20861">
    <property type="entry name" value="HOMOSERINE/4-DIPHOSPHOCYTIDYL-2-C-METHYL-D-ERYTHRITOL KINASE"/>
    <property type="match status" value="1"/>
</dbReference>
<dbReference type="Pfam" id="PF08544">
    <property type="entry name" value="GHMP_kinases_C"/>
    <property type="match status" value="1"/>
</dbReference>
<dbReference type="Pfam" id="PF00288">
    <property type="entry name" value="GHMP_kinases_N"/>
    <property type="match status" value="1"/>
</dbReference>
<dbReference type="PIRSF" id="PIRSF000676">
    <property type="entry name" value="Homoser_kin"/>
    <property type="match status" value="1"/>
</dbReference>
<dbReference type="PRINTS" id="PR00958">
    <property type="entry name" value="HOMSERKINASE"/>
</dbReference>
<dbReference type="SUPFAM" id="SSF55060">
    <property type="entry name" value="GHMP Kinase, C-terminal domain"/>
    <property type="match status" value="1"/>
</dbReference>
<dbReference type="SUPFAM" id="SSF54211">
    <property type="entry name" value="Ribosomal protein S5 domain 2-like"/>
    <property type="match status" value="1"/>
</dbReference>
<dbReference type="PROSITE" id="PS00627">
    <property type="entry name" value="GHMP_KINASES_ATP"/>
    <property type="match status" value="1"/>
</dbReference>
<organism>
    <name type="scientific">Synechococcus sp. (strain ATCC 27144 / PCC 6301 / SAUG 1402/1)</name>
    <name type="common">Anacystis nidulans</name>
    <dbReference type="NCBI Taxonomy" id="269084"/>
    <lineage>
        <taxon>Bacteria</taxon>
        <taxon>Bacillati</taxon>
        <taxon>Cyanobacteriota</taxon>
        <taxon>Cyanophyceae</taxon>
        <taxon>Synechococcales</taxon>
        <taxon>Synechococcaceae</taxon>
        <taxon>Synechococcus</taxon>
    </lineage>
</organism>
<reference key="1">
    <citation type="journal article" date="2007" name="Photosyn. Res.">
        <title>Complete nucleotide sequence of the freshwater unicellular cyanobacterium Synechococcus elongatus PCC 6301 chromosome: gene content and organization.</title>
        <authorList>
            <person name="Sugita C."/>
            <person name="Ogata K."/>
            <person name="Shikata M."/>
            <person name="Jikuya H."/>
            <person name="Takano J."/>
            <person name="Furumichi M."/>
            <person name="Kanehisa M."/>
            <person name="Omata T."/>
            <person name="Sugiura M."/>
            <person name="Sugita M."/>
        </authorList>
    </citation>
    <scope>NUCLEOTIDE SEQUENCE [LARGE SCALE GENOMIC DNA]</scope>
    <source>
        <strain>ATCC 27144 / PCC 6301 / SAUG 1402/1</strain>
    </source>
</reference>